<reference key="1">
    <citation type="journal article" date="2002" name="Proc. Natl. Acad. Sci. U.S.A.">
        <title>The genome sequence of Bifidobacterium longum reflects its adaptation to the human gastrointestinal tract.</title>
        <authorList>
            <person name="Schell M.A."/>
            <person name="Karmirantzou M."/>
            <person name="Snel B."/>
            <person name="Vilanova D."/>
            <person name="Berger B."/>
            <person name="Pessi G."/>
            <person name="Zwahlen M.-C."/>
            <person name="Desiere F."/>
            <person name="Bork P."/>
            <person name="Delley M."/>
            <person name="Pridmore R.D."/>
            <person name="Arigoni F."/>
        </authorList>
    </citation>
    <scope>NUCLEOTIDE SEQUENCE [LARGE SCALE GENOMIC DNA]</scope>
    <source>
        <strain>NCC 2705</strain>
    </source>
</reference>
<proteinExistence type="inferred from homology"/>
<name>TILS_BIFLO</name>
<sequence>MAYSARLRKAVGAVRATLSAVELCDVQAPEFAQHGDHAVAADAPLVLVACSGGRDSMALAAVSHIVCTSMGVRCGAVIVDHGLQAGSERVASEAADRCRALGLGPVIMRNATVQARGEGLEAAARQARYDELCAAAHESGAIAVLLAHTMDDQAETVLIGLLRSRGVDALAGMPQVFTRSGATFARPLLTLTRAETTGICEDLGVEYWDDPTNGDAVDGELPNDYPLRSRVRHDLLPAIERFAGFNVTRHFAESARLARMDKEYLDQRSDEVMGEAVAAVDRPASSAAVSTDAPRACVAGDTNDSGHGIGLMIGVKRIAREPEAIRLRVIAHALSQAGVNASAAQIAAIDRLVVDWHGQGGVSLPRGYSANRKKHVIRVCQDGAHANR</sequence>
<feature type="chain" id="PRO_0000181655" description="tRNA(Ile)-lysidine synthase">
    <location>
        <begin position="1"/>
        <end position="388"/>
    </location>
</feature>
<feature type="binding site" evidence="1">
    <location>
        <begin position="51"/>
        <end position="56"/>
    </location>
    <ligand>
        <name>ATP</name>
        <dbReference type="ChEBI" id="CHEBI:30616"/>
    </ligand>
</feature>
<dbReference type="EC" id="6.3.4.19" evidence="1"/>
<dbReference type="EMBL" id="AE014295">
    <property type="protein sequence ID" value="AAN25467.1"/>
    <property type="molecule type" value="Genomic_DNA"/>
</dbReference>
<dbReference type="RefSeq" id="NP_696831.1">
    <property type="nucleotide sequence ID" value="NC_004307.2"/>
</dbReference>
<dbReference type="RefSeq" id="WP_011068788.1">
    <property type="nucleotide sequence ID" value="NC_004307.2"/>
</dbReference>
<dbReference type="SMR" id="Q8G3S4"/>
<dbReference type="STRING" id="206672.BL1680"/>
<dbReference type="EnsemblBacteria" id="AAN25467">
    <property type="protein sequence ID" value="AAN25467"/>
    <property type="gene ID" value="BL1680"/>
</dbReference>
<dbReference type="KEGG" id="blo:BL1680"/>
<dbReference type="PATRIC" id="fig|206672.9.peg.1735"/>
<dbReference type="HOGENOM" id="CLU_018869_1_0_11"/>
<dbReference type="OrthoDB" id="5244702at2"/>
<dbReference type="PhylomeDB" id="Q8G3S4"/>
<dbReference type="Proteomes" id="UP000000439">
    <property type="component" value="Chromosome"/>
</dbReference>
<dbReference type="GO" id="GO:0005737">
    <property type="term" value="C:cytoplasm"/>
    <property type="evidence" value="ECO:0007669"/>
    <property type="project" value="UniProtKB-SubCell"/>
</dbReference>
<dbReference type="GO" id="GO:0005524">
    <property type="term" value="F:ATP binding"/>
    <property type="evidence" value="ECO:0007669"/>
    <property type="project" value="UniProtKB-UniRule"/>
</dbReference>
<dbReference type="GO" id="GO:0032267">
    <property type="term" value="F:tRNA(Ile)-lysidine synthase activity"/>
    <property type="evidence" value="ECO:0007669"/>
    <property type="project" value="UniProtKB-EC"/>
</dbReference>
<dbReference type="GO" id="GO:0006400">
    <property type="term" value="P:tRNA modification"/>
    <property type="evidence" value="ECO:0007669"/>
    <property type="project" value="UniProtKB-UniRule"/>
</dbReference>
<dbReference type="CDD" id="cd01992">
    <property type="entry name" value="TilS_N"/>
    <property type="match status" value="1"/>
</dbReference>
<dbReference type="Gene3D" id="3.40.50.620">
    <property type="entry name" value="HUPs"/>
    <property type="match status" value="1"/>
</dbReference>
<dbReference type="HAMAP" id="MF_01161">
    <property type="entry name" value="tRNA_Ile_lys_synt"/>
    <property type="match status" value="1"/>
</dbReference>
<dbReference type="InterPro" id="IPR014729">
    <property type="entry name" value="Rossmann-like_a/b/a_fold"/>
</dbReference>
<dbReference type="InterPro" id="IPR011063">
    <property type="entry name" value="TilS/TtcA_N"/>
</dbReference>
<dbReference type="InterPro" id="IPR012094">
    <property type="entry name" value="tRNA_Ile_lys_synt"/>
</dbReference>
<dbReference type="InterPro" id="IPR012795">
    <property type="entry name" value="tRNA_Ile_lys_synt_N"/>
</dbReference>
<dbReference type="InterPro" id="IPR015262">
    <property type="entry name" value="tRNA_Ile_lys_synt_subst-bd"/>
</dbReference>
<dbReference type="NCBIfam" id="TIGR02432">
    <property type="entry name" value="lysidine_TilS_N"/>
    <property type="match status" value="1"/>
</dbReference>
<dbReference type="PANTHER" id="PTHR43033">
    <property type="entry name" value="TRNA(ILE)-LYSIDINE SYNTHASE-RELATED"/>
    <property type="match status" value="1"/>
</dbReference>
<dbReference type="PANTHER" id="PTHR43033:SF1">
    <property type="entry name" value="TRNA(ILE)-LYSIDINE SYNTHASE-RELATED"/>
    <property type="match status" value="1"/>
</dbReference>
<dbReference type="Pfam" id="PF01171">
    <property type="entry name" value="ATP_bind_3"/>
    <property type="match status" value="1"/>
</dbReference>
<dbReference type="Pfam" id="PF09179">
    <property type="entry name" value="TilS"/>
    <property type="match status" value="1"/>
</dbReference>
<dbReference type="SUPFAM" id="SSF52402">
    <property type="entry name" value="Adenine nucleotide alpha hydrolases-like"/>
    <property type="match status" value="1"/>
</dbReference>
<dbReference type="SUPFAM" id="SSF82829">
    <property type="entry name" value="MesJ substrate recognition domain-like"/>
    <property type="match status" value="1"/>
</dbReference>
<accession>Q8G3S4</accession>
<comment type="function">
    <text evidence="1">Ligates lysine onto the cytidine present at position 34 of the AUA codon-specific tRNA(Ile) that contains the anticodon CAU, in an ATP-dependent manner. Cytidine is converted to lysidine, thus changing the amino acid specificity of the tRNA from methionine to isoleucine.</text>
</comment>
<comment type="catalytic activity">
    <reaction evidence="1">
        <text>cytidine(34) in tRNA(Ile2) + L-lysine + ATP = lysidine(34) in tRNA(Ile2) + AMP + diphosphate + H(+)</text>
        <dbReference type="Rhea" id="RHEA:43744"/>
        <dbReference type="Rhea" id="RHEA-COMP:10625"/>
        <dbReference type="Rhea" id="RHEA-COMP:10670"/>
        <dbReference type="ChEBI" id="CHEBI:15378"/>
        <dbReference type="ChEBI" id="CHEBI:30616"/>
        <dbReference type="ChEBI" id="CHEBI:32551"/>
        <dbReference type="ChEBI" id="CHEBI:33019"/>
        <dbReference type="ChEBI" id="CHEBI:82748"/>
        <dbReference type="ChEBI" id="CHEBI:83665"/>
        <dbReference type="ChEBI" id="CHEBI:456215"/>
        <dbReference type="EC" id="6.3.4.19"/>
    </reaction>
</comment>
<comment type="subcellular location">
    <subcellularLocation>
        <location evidence="1">Cytoplasm</location>
    </subcellularLocation>
</comment>
<comment type="domain">
    <text>The N-terminal region contains the highly conserved SGGXDS motif, predicted to be a P-loop motif involved in ATP binding.</text>
</comment>
<comment type="similarity">
    <text evidence="1">Belongs to the tRNA(Ile)-lysidine synthase family.</text>
</comment>
<protein>
    <recommendedName>
        <fullName evidence="1">tRNA(Ile)-lysidine synthase</fullName>
        <ecNumber evidence="1">6.3.4.19</ecNumber>
    </recommendedName>
    <alternativeName>
        <fullName evidence="1">tRNA(Ile)-2-lysyl-cytidine synthase</fullName>
    </alternativeName>
    <alternativeName>
        <fullName evidence="1">tRNA(Ile)-lysidine synthetase</fullName>
    </alternativeName>
</protein>
<gene>
    <name evidence="1" type="primary">tilS</name>
    <name type="ordered locus">BL1680</name>
</gene>
<evidence type="ECO:0000255" key="1">
    <source>
        <dbReference type="HAMAP-Rule" id="MF_01161"/>
    </source>
</evidence>
<keyword id="KW-0067">ATP-binding</keyword>
<keyword id="KW-0963">Cytoplasm</keyword>
<keyword id="KW-0436">Ligase</keyword>
<keyword id="KW-0547">Nucleotide-binding</keyword>
<keyword id="KW-1185">Reference proteome</keyword>
<keyword id="KW-0819">tRNA processing</keyword>
<organism>
    <name type="scientific">Bifidobacterium longum (strain NCC 2705)</name>
    <dbReference type="NCBI Taxonomy" id="206672"/>
    <lineage>
        <taxon>Bacteria</taxon>
        <taxon>Bacillati</taxon>
        <taxon>Actinomycetota</taxon>
        <taxon>Actinomycetes</taxon>
        <taxon>Bifidobacteriales</taxon>
        <taxon>Bifidobacteriaceae</taxon>
        <taxon>Bifidobacterium</taxon>
    </lineage>
</organism>